<protein>
    <recommendedName>
        <fullName evidence="3">Ferric nitrobindin-like protein</fullName>
    </recommendedName>
</protein>
<reference key="1">
    <citation type="journal article" date="2004" name="Proc. Natl. Acad. Sci. U.S.A.">
        <title>The complete genomic sequence of Nocardia farcinica IFM 10152.</title>
        <authorList>
            <person name="Ishikawa J."/>
            <person name="Yamashita A."/>
            <person name="Mikami Y."/>
            <person name="Hoshino Y."/>
            <person name="Kurita H."/>
            <person name="Hotta K."/>
            <person name="Shiba T."/>
            <person name="Hattori M."/>
        </authorList>
    </citation>
    <scope>NUCLEOTIDE SEQUENCE [LARGE SCALE GENOMIC DNA]</scope>
    <source>
        <strain>IFM 10152</strain>
    </source>
</reference>
<accession>Q5Z2A5</accession>
<gene>
    <name type="ordered locus">NFA_5910</name>
</gene>
<comment type="similarity">
    <text evidence="1">Belongs to the nitrobindin family.</text>
</comment>
<comment type="caution">
    <text evidence="3">Lacks the conserved His residue that binds heme iron in the nitrobindin family.</text>
</comment>
<dbReference type="EMBL" id="AP006618">
    <property type="protein sequence ID" value="BAD55436.1"/>
    <property type="molecule type" value="Genomic_DNA"/>
</dbReference>
<dbReference type="RefSeq" id="WP_011207123.1">
    <property type="nucleotide sequence ID" value="NC_006361.1"/>
</dbReference>
<dbReference type="SMR" id="Q5Z2A5"/>
<dbReference type="STRING" id="247156.NFA_5910"/>
<dbReference type="GeneID" id="61131426"/>
<dbReference type="KEGG" id="nfa:NFA_5910"/>
<dbReference type="eggNOG" id="COG4044">
    <property type="taxonomic scope" value="Bacteria"/>
</dbReference>
<dbReference type="HOGENOM" id="CLU_085483_0_0_11"/>
<dbReference type="OrthoDB" id="4804006at2"/>
<dbReference type="Proteomes" id="UP000006820">
    <property type="component" value="Chromosome"/>
</dbReference>
<dbReference type="CDD" id="cd07828">
    <property type="entry name" value="lipocalin_heme-bd-THAP4-like"/>
    <property type="match status" value="1"/>
</dbReference>
<dbReference type="Gene3D" id="2.40.128.20">
    <property type="match status" value="1"/>
</dbReference>
<dbReference type="HAMAP" id="MF_01297">
    <property type="entry name" value="nitrobindin"/>
    <property type="match status" value="1"/>
</dbReference>
<dbReference type="InterPro" id="IPR012674">
    <property type="entry name" value="Calycin"/>
</dbReference>
<dbReference type="InterPro" id="IPR022939">
    <property type="entry name" value="Nb(III)_bact/plant"/>
</dbReference>
<dbReference type="InterPro" id="IPR045165">
    <property type="entry name" value="Nitrobindin"/>
</dbReference>
<dbReference type="InterPro" id="IPR014878">
    <property type="entry name" value="THAP4-like_heme-bd"/>
</dbReference>
<dbReference type="PANTHER" id="PTHR15854:SF4">
    <property type="entry name" value="PEROXYNITRITE ISOMERASE THAP4"/>
    <property type="match status" value="1"/>
</dbReference>
<dbReference type="PANTHER" id="PTHR15854">
    <property type="entry name" value="THAP4 PROTEIN"/>
    <property type="match status" value="1"/>
</dbReference>
<dbReference type="Pfam" id="PF08768">
    <property type="entry name" value="THAP4_heme-bd"/>
    <property type="match status" value="1"/>
</dbReference>
<dbReference type="SUPFAM" id="SSF50814">
    <property type="entry name" value="Lipocalins"/>
    <property type="match status" value="1"/>
</dbReference>
<proteinExistence type="inferred from homology"/>
<feature type="chain" id="PRO_0000356942" description="Ferric nitrobindin-like protein">
    <location>
        <begin position="1"/>
        <end position="235"/>
    </location>
</feature>
<feature type="region of interest" description="Disordered" evidence="2">
    <location>
        <begin position="1"/>
        <end position="59"/>
    </location>
</feature>
<feature type="short sequence motif" description="GXWXGXG" evidence="1">
    <location>
        <begin position="85"/>
        <end position="91"/>
    </location>
</feature>
<name>NBLIK_NOCFA</name>
<organism>
    <name type="scientific">Nocardia farcinica (strain IFM 10152)</name>
    <dbReference type="NCBI Taxonomy" id="247156"/>
    <lineage>
        <taxon>Bacteria</taxon>
        <taxon>Bacillati</taxon>
        <taxon>Actinomycetota</taxon>
        <taxon>Actinomycetes</taxon>
        <taxon>Mycobacteriales</taxon>
        <taxon>Nocardiaceae</taxon>
        <taxon>Nocardia</taxon>
    </lineage>
</organism>
<evidence type="ECO:0000255" key="1">
    <source>
        <dbReference type="HAMAP-Rule" id="MF_01297"/>
    </source>
</evidence>
<evidence type="ECO:0000256" key="2">
    <source>
        <dbReference type="SAM" id="MobiDB-lite"/>
    </source>
</evidence>
<evidence type="ECO:0000305" key="3"/>
<sequence>MSDLASEGSDPAERASEHSNGNAPADRPARRSGDQAVADAAERAKATGSRNIPVLPDLPLPEDTANLRLGPDLSPAMLALLPMVGVWRGEGEGNDPARGDYRFGQQIIVSHDGGDYLSWESRSWFIEADGSYGGPDLRETGFWRVGVDGDDEVIELLLTHSSGIVELFYGTALTQSSWELATDVVIRSQSGVVVGGAKRLYGIVEGGDLAYVEERVVADGPLEPRLSARLQRYIG</sequence>
<keyword id="KW-1185">Reference proteome</keyword>